<keyword id="KW-0687">Ribonucleoprotein</keyword>
<keyword id="KW-0689">Ribosomal protein</keyword>
<keyword id="KW-0694">RNA-binding</keyword>
<keyword id="KW-0699">rRNA-binding</keyword>
<proteinExistence type="inferred from homology"/>
<reference key="1">
    <citation type="submission" date="2008-06" db="EMBL/GenBank/DDBJ databases">
        <title>Genome and proteome analysis of A. pleuropneumoniae serotype 7.</title>
        <authorList>
            <person name="Linke B."/>
            <person name="Buettner F."/>
            <person name="Martinez-Arias R."/>
            <person name="Goesmann A."/>
            <person name="Baltes N."/>
            <person name="Tegetmeyer H."/>
            <person name="Singh M."/>
            <person name="Gerlach G.F."/>
        </authorList>
    </citation>
    <scope>NUCLEOTIDE SEQUENCE [LARGE SCALE GENOMIC DNA]</scope>
    <source>
        <strain>AP76</strain>
    </source>
</reference>
<organism>
    <name type="scientific">Actinobacillus pleuropneumoniae serotype 7 (strain AP76)</name>
    <dbReference type="NCBI Taxonomy" id="537457"/>
    <lineage>
        <taxon>Bacteria</taxon>
        <taxon>Pseudomonadati</taxon>
        <taxon>Pseudomonadota</taxon>
        <taxon>Gammaproteobacteria</taxon>
        <taxon>Pasteurellales</taxon>
        <taxon>Pasteurellaceae</taxon>
        <taxon>Actinobacillus</taxon>
    </lineage>
</organism>
<name>RS14_ACTP7</name>
<feature type="chain" id="PRO_1000128283" description="Small ribosomal subunit protein uS14">
    <location>
        <begin position="1"/>
        <end position="101"/>
    </location>
</feature>
<dbReference type="EMBL" id="CP001091">
    <property type="protein sequence ID" value="ACE62510.1"/>
    <property type="molecule type" value="Genomic_DNA"/>
</dbReference>
<dbReference type="RefSeq" id="WP_005602614.1">
    <property type="nucleotide sequence ID" value="NC_010939.1"/>
</dbReference>
<dbReference type="SMR" id="B3GZ24"/>
<dbReference type="KEGG" id="apa:APP7_1858"/>
<dbReference type="HOGENOM" id="CLU_139869_0_1_6"/>
<dbReference type="Proteomes" id="UP000001226">
    <property type="component" value="Chromosome"/>
</dbReference>
<dbReference type="GO" id="GO:0005737">
    <property type="term" value="C:cytoplasm"/>
    <property type="evidence" value="ECO:0007669"/>
    <property type="project" value="UniProtKB-ARBA"/>
</dbReference>
<dbReference type="GO" id="GO:0015935">
    <property type="term" value="C:small ribosomal subunit"/>
    <property type="evidence" value="ECO:0007669"/>
    <property type="project" value="TreeGrafter"/>
</dbReference>
<dbReference type="GO" id="GO:0019843">
    <property type="term" value="F:rRNA binding"/>
    <property type="evidence" value="ECO:0007669"/>
    <property type="project" value="UniProtKB-UniRule"/>
</dbReference>
<dbReference type="GO" id="GO:0003735">
    <property type="term" value="F:structural constituent of ribosome"/>
    <property type="evidence" value="ECO:0007669"/>
    <property type="project" value="InterPro"/>
</dbReference>
<dbReference type="GO" id="GO:0006412">
    <property type="term" value="P:translation"/>
    <property type="evidence" value="ECO:0007669"/>
    <property type="project" value="UniProtKB-UniRule"/>
</dbReference>
<dbReference type="FunFam" id="1.10.287.1480:FF:000001">
    <property type="entry name" value="30S ribosomal protein S14"/>
    <property type="match status" value="1"/>
</dbReference>
<dbReference type="Gene3D" id="1.10.287.1480">
    <property type="match status" value="1"/>
</dbReference>
<dbReference type="HAMAP" id="MF_00537">
    <property type="entry name" value="Ribosomal_uS14_1"/>
    <property type="match status" value="1"/>
</dbReference>
<dbReference type="InterPro" id="IPR001209">
    <property type="entry name" value="Ribosomal_uS14"/>
</dbReference>
<dbReference type="InterPro" id="IPR023036">
    <property type="entry name" value="Ribosomal_uS14_bac/plastid"/>
</dbReference>
<dbReference type="InterPro" id="IPR018271">
    <property type="entry name" value="Ribosomal_uS14_CS"/>
</dbReference>
<dbReference type="NCBIfam" id="NF006477">
    <property type="entry name" value="PRK08881.1"/>
    <property type="match status" value="1"/>
</dbReference>
<dbReference type="PANTHER" id="PTHR19836">
    <property type="entry name" value="30S RIBOSOMAL PROTEIN S14"/>
    <property type="match status" value="1"/>
</dbReference>
<dbReference type="PANTHER" id="PTHR19836:SF19">
    <property type="entry name" value="SMALL RIBOSOMAL SUBUNIT PROTEIN US14M"/>
    <property type="match status" value="1"/>
</dbReference>
<dbReference type="Pfam" id="PF00253">
    <property type="entry name" value="Ribosomal_S14"/>
    <property type="match status" value="1"/>
</dbReference>
<dbReference type="SUPFAM" id="SSF57716">
    <property type="entry name" value="Glucocorticoid receptor-like (DNA-binding domain)"/>
    <property type="match status" value="1"/>
</dbReference>
<dbReference type="PROSITE" id="PS00527">
    <property type="entry name" value="RIBOSOMAL_S14"/>
    <property type="match status" value="1"/>
</dbReference>
<comment type="function">
    <text evidence="1">Binds 16S rRNA, required for the assembly of 30S particles and may also be responsible for determining the conformation of the 16S rRNA at the A site.</text>
</comment>
<comment type="subunit">
    <text evidence="1">Part of the 30S ribosomal subunit. Contacts proteins S3 and S10.</text>
</comment>
<comment type="similarity">
    <text evidence="1">Belongs to the universal ribosomal protein uS14 family.</text>
</comment>
<evidence type="ECO:0000255" key="1">
    <source>
        <dbReference type="HAMAP-Rule" id="MF_00537"/>
    </source>
</evidence>
<evidence type="ECO:0000305" key="2"/>
<accession>B3GZ24</accession>
<gene>
    <name evidence="1" type="primary">rpsN</name>
    <name type="ordered locus">APP7_1858</name>
</gene>
<sequence>MAKQSMIARDVKRAKLADKFYAKREELKKIISDANSSDEDRWAAVLKLQTLPRDSSPSRQRNRCRQTGRPHGVLRKFGLSRIKVREAAMRGEIPGLKKASW</sequence>
<protein>
    <recommendedName>
        <fullName evidence="1">Small ribosomal subunit protein uS14</fullName>
    </recommendedName>
    <alternativeName>
        <fullName evidence="2">30S ribosomal protein S14</fullName>
    </alternativeName>
</protein>